<comment type="function">
    <text evidence="2">Secreted effector that completely suppresses the host cell death induced by cell death-inducing proteins.</text>
</comment>
<comment type="subcellular location">
    <subcellularLocation>
        <location evidence="2">Secreted</location>
    </subcellularLocation>
    <subcellularLocation>
        <location evidence="2">Host nucleus</location>
    </subcellularLocation>
</comment>
<comment type="domain">
    <text evidence="5">The RxLR-dEER motif acts to carry the protein into the host cell cytoplasm through binding to cell surface phosphatidylinositol-3-phosphate.</text>
</comment>
<comment type="similarity">
    <text evidence="4">Belongs to the RxLR effector family.</text>
</comment>
<protein>
    <recommendedName>
        <fullName evidence="3">Secreted RxLR effector protein 14</fullName>
    </recommendedName>
</protein>
<gene>
    <name evidence="3" type="primary">RXLR14</name>
</gene>
<evidence type="ECO:0000255" key="1"/>
<evidence type="ECO:0000269" key="2">
    <source>
    </source>
</evidence>
<evidence type="ECO:0000303" key="3">
    <source>
    </source>
</evidence>
<evidence type="ECO:0000305" key="4"/>
<evidence type="ECO:0000305" key="5">
    <source>
    </source>
</evidence>
<proteinExistence type="evidence at transcript level"/>
<organism>
    <name type="scientific">Plasmopara viticola</name>
    <name type="common">Downy mildew of grapevine</name>
    <name type="synonym">Botrytis viticola</name>
    <dbReference type="NCBI Taxonomy" id="143451"/>
    <lineage>
        <taxon>Eukaryota</taxon>
        <taxon>Sar</taxon>
        <taxon>Stramenopiles</taxon>
        <taxon>Oomycota</taxon>
        <taxon>Peronosporales</taxon>
        <taxon>Peronosporaceae</taxon>
        <taxon>Plasmopara</taxon>
    </lineage>
</organism>
<sequence>MHSFKLLLALIVAICTSCDAVPRGSLSDESNFKSYPVAQYEAANHRLLRAKDGKVRADEERLSSNPDSMLTRIKSFVNPGPFHELVRTATAIAERLKETVHSTLDHWLTIQRFNHLLGHCDHDSMDSAIVRGFHPSEFRVWLDLKSPLATEVVDSLDEWPKSTQLQSLLKFIKHYHSLLLPPPNHWAKVRASINPSHASSKPLFHDVYGIKEALEEMDHIIDQDLSVATMLEQKVSPLLYKVALEARELKTGKRIDRSKLNRFIKGYMAQYPSLDKFESMVNGYAPPGKFRKIPTFKGLDDDVINPPKYLNP</sequence>
<feature type="signal peptide" evidence="1">
    <location>
        <begin position="1"/>
        <end position="20"/>
    </location>
</feature>
<feature type="chain" id="PRO_0000447906" description="Secreted RxLR effector protein 14">
    <location>
        <begin position="21"/>
        <end position="312"/>
    </location>
</feature>
<feature type="short sequence motif" description="RxLR-dEER" evidence="5">
    <location>
        <begin position="46"/>
        <end position="61"/>
    </location>
</feature>
<dbReference type="SMR" id="P0CU97"/>
<dbReference type="GO" id="GO:0005576">
    <property type="term" value="C:extracellular region"/>
    <property type="evidence" value="ECO:0007669"/>
    <property type="project" value="UniProtKB-SubCell"/>
</dbReference>
<dbReference type="GO" id="GO:0042025">
    <property type="term" value="C:host cell nucleus"/>
    <property type="evidence" value="ECO:0007669"/>
    <property type="project" value="UniProtKB-SubCell"/>
</dbReference>
<reference key="1">
    <citation type="journal article" date="2018" name="Front. Plant Sci.">
        <title>In planta functional analysis and subcellular localization of the oomycete pathogen Plasmopara viticola candidate RXLR effector repertoire.</title>
        <authorList>
            <person name="Liu Y."/>
            <person name="Lan X."/>
            <person name="Song S."/>
            <person name="Yin L."/>
            <person name="Dry I.B."/>
            <person name="Qu J."/>
            <person name="Xiang J."/>
            <person name="Lu J."/>
        </authorList>
    </citation>
    <scope>NUCLEOTIDE SEQUENCE [MRNA]</scope>
    <scope>DOMAIN</scope>
    <scope>FUNCTION</scope>
    <scope>SUBCELLULAR LOCATION</scope>
</reference>
<name>RLR14_PLAVT</name>
<keyword id="KW-1048">Host nucleus</keyword>
<keyword id="KW-0964">Secreted</keyword>
<keyword id="KW-0732">Signal</keyword>
<keyword id="KW-0843">Virulence</keyword>
<accession>P0CU97</accession>